<keyword id="KW-0227">DNA damage</keyword>
<keyword id="KW-0233">DNA recombination</keyword>
<keyword id="KW-0234">DNA repair</keyword>
<comment type="function">
    <text evidence="1">Involved in DNA repair and RecF pathway recombination.</text>
</comment>
<comment type="similarity">
    <text evidence="1">Belongs to the RecO family.</text>
</comment>
<reference key="1">
    <citation type="journal article" date="2004" name="J. Infect. Dis.">
        <title>Progress toward characterization of the group A Streptococcus metagenome: complete genome sequence of a macrolide-resistant serotype M6 strain.</title>
        <authorList>
            <person name="Banks D.J."/>
            <person name="Porcella S.F."/>
            <person name="Barbian K.D."/>
            <person name="Beres S.B."/>
            <person name="Philips L.E."/>
            <person name="Voyich J.M."/>
            <person name="DeLeo F.R."/>
            <person name="Martin J.M."/>
            <person name="Somerville G.A."/>
            <person name="Musser J.M."/>
        </authorList>
    </citation>
    <scope>NUCLEOTIDE SEQUENCE [LARGE SCALE GENOMIC DNA]</scope>
    <source>
        <strain>ATCC BAA-946 / MGAS10394</strain>
    </source>
</reference>
<protein>
    <recommendedName>
        <fullName evidence="1">DNA repair protein RecO</fullName>
    </recommendedName>
    <alternativeName>
        <fullName evidence="1">Recombination protein O</fullName>
    </alternativeName>
</protein>
<organism>
    <name type="scientific">Streptococcus pyogenes serotype M6 (strain ATCC BAA-946 / MGAS10394)</name>
    <dbReference type="NCBI Taxonomy" id="286636"/>
    <lineage>
        <taxon>Bacteria</taxon>
        <taxon>Bacillati</taxon>
        <taxon>Bacillota</taxon>
        <taxon>Bacilli</taxon>
        <taxon>Lactobacillales</taxon>
        <taxon>Streptococcaceae</taxon>
        <taxon>Streptococcus</taxon>
    </lineage>
</organism>
<evidence type="ECO:0000255" key="1">
    <source>
        <dbReference type="HAMAP-Rule" id="MF_00201"/>
    </source>
</evidence>
<gene>
    <name evidence="1" type="primary">recO</name>
    <name type="ordered locus">M6_Spy0019</name>
</gene>
<feature type="chain" id="PRO_0000205013" description="DNA repair protein RecO">
    <location>
        <begin position="1"/>
        <end position="251"/>
    </location>
</feature>
<dbReference type="EMBL" id="CP000003">
    <property type="protein sequence ID" value="AAT86154.1"/>
    <property type="molecule type" value="Genomic_DNA"/>
</dbReference>
<dbReference type="RefSeq" id="WP_002986719.1">
    <property type="nucleotide sequence ID" value="NC_006086.1"/>
</dbReference>
<dbReference type="SMR" id="Q5XEK9"/>
<dbReference type="GeneID" id="69900002"/>
<dbReference type="KEGG" id="spa:M6_Spy0019"/>
<dbReference type="HOGENOM" id="CLU_066632_4_0_9"/>
<dbReference type="Proteomes" id="UP000001167">
    <property type="component" value="Chromosome"/>
</dbReference>
<dbReference type="GO" id="GO:0043590">
    <property type="term" value="C:bacterial nucleoid"/>
    <property type="evidence" value="ECO:0007669"/>
    <property type="project" value="TreeGrafter"/>
</dbReference>
<dbReference type="GO" id="GO:0006310">
    <property type="term" value="P:DNA recombination"/>
    <property type="evidence" value="ECO:0007669"/>
    <property type="project" value="UniProtKB-UniRule"/>
</dbReference>
<dbReference type="GO" id="GO:0006302">
    <property type="term" value="P:double-strand break repair"/>
    <property type="evidence" value="ECO:0007669"/>
    <property type="project" value="TreeGrafter"/>
</dbReference>
<dbReference type="Gene3D" id="2.40.50.140">
    <property type="entry name" value="Nucleic acid-binding proteins"/>
    <property type="match status" value="1"/>
</dbReference>
<dbReference type="Gene3D" id="1.20.1440.120">
    <property type="entry name" value="Recombination protein O, C-terminal domain"/>
    <property type="match status" value="1"/>
</dbReference>
<dbReference type="HAMAP" id="MF_00201">
    <property type="entry name" value="RecO"/>
    <property type="match status" value="1"/>
</dbReference>
<dbReference type="InterPro" id="IPR037278">
    <property type="entry name" value="ARFGAP/RecO"/>
</dbReference>
<dbReference type="InterPro" id="IPR022572">
    <property type="entry name" value="DNA_rep/recomb_RecO_N"/>
</dbReference>
<dbReference type="InterPro" id="IPR012340">
    <property type="entry name" value="NA-bd_OB-fold"/>
</dbReference>
<dbReference type="InterPro" id="IPR003717">
    <property type="entry name" value="RecO"/>
</dbReference>
<dbReference type="InterPro" id="IPR042242">
    <property type="entry name" value="RecO_C"/>
</dbReference>
<dbReference type="NCBIfam" id="TIGR00613">
    <property type="entry name" value="reco"/>
    <property type="match status" value="1"/>
</dbReference>
<dbReference type="PANTHER" id="PTHR33991">
    <property type="entry name" value="DNA REPAIR PROTEIN RECO"/>
    <property type="match status" value="1"/>
</dbReference>
<dbReference type="PANTHER" id="PTHR33991:SF1">
    <property type="entry name" value="DNA REPAIR PROTEIN RECO"/>
    <property type="match status" value="1"/>
</dbReference>
<dbReference type="Pfam" id="PF02565">
    <property type="entry name" value="RecO_C"/>
    <property type="match status" value="1"/>
</dbReference>
<dbReference type="Pfam" id="PF11967">
    <property type="entry name" value="RecO_N"/>
    <property type="match status" value="1"/>
</dbReference>
<dbReference type="SUPFAM" id="SSF57863">
    <property type="entry name" value="ArfGap/RecO-like zinc finger"/>
    <property type="match status" value="1"/>
</dbReference>
<dbReference type="SUPFAM" id="SSF50249">
    <property type="entry name" value="Nucleic acid-binding proteins"/>
    <property type="match status" value="1"/>
</dbReference>
<sequence>MQLTESLGIVLFNRNYREDDKLVKIFTEVAGKQMFFVKHISRSKMSSIIQPLTIADFIFKLNDTGLSYVVDYSNVNTYRYINNDIFRLAYASYVLALADAAIADNESDSHLFTFLKKTLDLMEEGLDYEILTNIFEIQILDRFGISLNFHECAICHRTDLPLDFSHRFSAVLCSEHYYKDNRRNHLDPNVIYLLSRFQKITFDDLRTISLNKDIKKKLRQFIDELYHDYVGIKLKSKTFIDNLVKWGDIMK</sequence>
<accession>Q5XEK9</accession>
<proteinExistence type="inferred from homology"/>
<name>RECO_STRP6</name>